<geneLocation type="chloroplast"/>
<gene>
    <name type="primary">ycf19</name>
</gene>
<accession>Q1XDD4</accession>
<protein>
    <recommendedName>
        <fullName>Uncharacterized protein ycf19</fullName>
    </recommendedName>
</protein>
<reference key="1">
    <citation type="submission" date="2003-11" db="EMBL/GenBank/DDBJ databases">
        <title>Whole genome sequence of Porphyra yezoensis chloroplast.</title>
        <authorList>
            <person name="Kunimoto M."/>
            <person name="Morishima K."/>
            <person name="Yoshikawa M."/>
            <person name="Fukuda S."/>
            <person name="Kobayashi T."/>
            <person name="Kobayashi M."/>
            <person name="Okazaki T."/>
            <person name="Ohara I."/>
            <person name="Nakayama I."/>
        </authorList>
    </citation>
    <scope>NUCLEOTIDE SEQUENCE [LARGE SCALE GENOMIC DNA]</scope>
    <source>
        <strain>U-51</strain>
    </source>
</reference>
<comment type="subcellular location">
    <subcellularLocation>
        <location>Plastid</location>
        <location>Chloroplast</location>
    </subcellularLocation>
</comment>
<comment type="similarity">
    <text evidence="1">Belongs to the ycf19 family.</text>
</comment>
<name>YCF19_PYRYE</name>
<dbReference type="EMBL" id="AP006715">
    <property type="protein sequence ID" value="BAE92477.1"/>
    <property type="molecule type" value="Genomic_DNA"/>
</dbReference>
<dbReference type="RefSeq" id="YP_537034.1">
    <property type="nucleotide sequence ID" value="NC_007932.1"/>
</dbReference>
<dbReference type="SMR" id="Q1XDD4"/>
<dbReference type="GO" id="GO:0009507">
    <property type="term" value="C:chloroplast"/>
    <property type="evidence" value="ECO:0007669"/>
    <property type="project" value="UniProtKB-SubCell"/>
</dbReference>
<dbReference type="GO" id="GO:0016020">
    <property type="term" value="C:membrane"/>
    <property type="evidence" value="ECO:0007669"/>
    <property type="project" value="InterPro"/>
</dbReference>
<dbReference type="GO" id="GO:0010020">
    <property type="term" value="P:chloroplast fission"/>
    <property type="evidence" value="ECO:0007669"/>
    <property type="project" value="TreeGrafter"/>
</dbReference>
<dbReference type="GO" id="GO:0090143">
    <property type="term" value="P:nucleoid organization"/>
    <property type="evidence" value="ECO:0007669"/>
    <property type="project" value="TreeGrafter"/>
</dbReference>
<dbReference type="InterPro" id="IPR003425">
    <property type="entry name" value="CCB3/YggT"/>
</dbReference>
<dbReference type="PANTHER" id="PTHR33219:SF14">
    <property type="entry name" value="PROTEIN COFACTOR ASSEMBLY OF COMPLEX C SUBUNIT B CCB3, CHLOROPLASTIC-RELATED"/>
    <property type="match status" value="1"/>
</dbReference>
<dbReference type="PANTHER" id="PTHR33219">
    <property type="entry name" value="YLMG HOMOLOG PROTEIN 2, CHLOROPLASTIC"/>
    <property type="match status" value="1"/>
</dbReference>
<dbReference type="Pfam" id="PF02325">
    <property type="entry name" value="YGGT"/>
    <property type="match status" value="1"/>
</dbReference>
<proteinExistence type="inferred from homology"/>
<sequence length="95" mass="10832">MNTLPGTLNLLLGSIANFSEIYLILILLKLSLAWFPTVNWYNEPFCSLNRITDPYLKLFRGSIPPMFGMDMSPMLGIIFLQCLMVIFNNVRLESA</sequence>
<feature type="chain" id="PRO_0000277267" description="Uncharacterized protein ycf19">
    <location>
        <begin position="1"/>
        <end position="95"/>
    </location>
</feature>
<organism>
    <name type="scientific">Pyropia yezoensis</name>
    <name type="common">Susabi-nori</name>
    <name type="synonym">Porphyra yezoensis</name>
    <dbReference type="NCBI Taxonomy" id="2788"/>
    <lineage>
        <taxon>Eukaryota</taxon>
        <taxon>Rhodophyta</taxon>
        <taxon>Bangiophyceae</taxon>
        <taxon>Bangiales</taxon>
        <taxon>Bangiaceae</taxon>
        <taxon>Pyropia</taxon>
    </lineage>
</organism>
<evidence type="ECO:0000305" key="1"/>
<keyword id="KW-0150">Chloroplast</keyword>
<keyword id="KW-0934">Plastid</keyword>